<gene>
    <name type="ordered locus">alr3139</name>
</gene>
<protein>
    <recommendedName>
        <fullName>Putative 5'-nucleotidase alr3139</fullName>
        <ecNumber>3.1.3.5</ecNumber>
    </recommendedName>
    <alternativeName>
        <fullName>Nucleoside 5'-monophosphate phosphohydrolase</fullName>
    </alternativeName>
</protein>
<evidence type="ECO:0000250" key="1"/>
<evidence type="ECO:0000305" key="2"/>
<dbReference type="EC" id="3.1.3.5"/>
<dbReference type="EMBL" id="BA000019">
    <property type="protein sequence ID" value="BAB74838.1"/>
    <property type="molecule type" value="Genomic_DNA"/>
</dbReference>
<dbReference type="PIR" id="AD2198">
    <property type="entry name" value="AD2198"/>
</dbReference>
<dbReference type="SMR" id="Q8YSE9"/>
<dbReference type="STRING" id="103690.gene:10495176"/>
<dbReference type="KEGG" id="ana:alr3139"/>
<dbReference type="eggNOG" id="COG0496">
    <property type="taxonomic scope" value="Bacteria"/>
</dbReference>
<dbReference type="OrthoDB" id="9780815at2"/>
<dbReference type="Proteomes" id="UP000002483">
    <property type="component" value="Chromosome"/>
</dbReference>
<dbReference type="GO" id="GO:0005737">
    <property type="term" value="C:cytoplasm"/>
    <property type="evidence" value="ECO:0007669"/>
    <property type="project" value="UniProtKB-SubCell"/>
</dbReference>
<dbReference type="GO" id="GO:0008253">
    <property type="term" value="F:5'-nucleotidase activity"/>
    <property type="evidence" value="ECO:0007669"/>
    <property type="project" value="UniProtKB-EC"/>
</dbReference>
<dbReference type="GO" id="GO:0046872">
    <property type="term" value="F:metal ion binding"/>
    <property type="evidence" value="ECO:0007669"/>
    <property type="project" value="UniProtKB-KW"/>
</dbReference>
<dbReference type="GO" id="GO:0000166">
    <property type="term" value="F:nucleotide binding"/>
    <property type="evidence" value="ECO:0007669"/>
    <property type="project" value="UniProtKB-KW"/>
</dbReference>
<dbReference type="Gene3D" id="3.40.1210.10">
    <property type="entry name" value="Survival protein SurE-like phosphatase/nucleotidase"/>
    <property type="match status" value="1"/>
</dbReference>
<dbReference type="InterPro" id="IPR030048">
    <property type="entry name" value="SurE"/>
</dbReference>
<dbReference type="InterPro" id="IPR002828">
    <property type="entry name" value="SurE-like_Pase/nucleotidase"/>
</dbReference>
<dbReference type="InterPro" id="IPR036523">
    <property type="entry name" value="SurE-like_sf"/>
</dbReference>
<dbReference type="NCBIfam" id="NF001493">
    <property type="entry name" value="PRK00346.2-3"/>
    <property type="match status" value="1"/>
</dbReference>
<dbReference type="NCBIfam" id="TIGR00087">
    <property type="entry name" value="surE"/>
    <property type="match status" value="1"/>
</dbReference>
<dbReference type="PANTHER" id="PTHR30457">
    <property type="entry name" value="5'-NUCLEOTIDASE SURE"/>
    <property type="match status" value="1"/>
</dbReference>
<dbReference type="PANTHER" id="PTHR30457:SF0">
    <property type="entry name" value="PHOSPHATASE, PUTATIVE (AFU_ORTHOLOGUE AFUA_4G01070)-RELATED"/>
    <property type="match status" value="1"/>
</dbReference>
<dbReference type="Pfam" id="PF01975">
    <property type="entry name" value="SurE"/>
    <property type="match status" value="1"/>
</dbReference>
<dbReference type="SUPFAM" id="SSF64167">
    <property type="entry name" value="SurE-like"/>
    <property type="match status" value="1"/>
</dbReference>
<proteinExistence type="inferred from homology"/>
<feature type="chain" id="PRO_0000111872" description="Putative 5'-nucleotidase alr3139">
    <location>
        <begin position="1"/>
        <end position="226"/>
    </location>
</feature>
<feature type="binding site" evidence="1">
    <location>
        <position position="8"/>
    </location>
    <ligand>
        <name>a divalent metal cation</name>
        <dbReference type="ChEBI" id="CHEBI:60240"/>
    </ligand>
</feature>
<feature type="binding site" evidence="1">
    <location>
        <position position="9"/>
    </location>
    <ligand>
        <name>a divalent metal cation</name>
        <dbReference type="ChEBI" id="CHEBI:60240"/>
    </ligand>
</feature>
<feature type="binding site" evidence="1">
    <location>
        <position position="38"/>
    </location>
    <ligand>
        <name>a divalent metal cation</name>
        <dbReference type="ChEBI" id="CHEBI:60240"/>
    </ligand>
</feature>
<feature type="binding site" evidence="1">
    <location>
        <position position="89"/>
    </location>
    <ligand>
        <name>a divalent metal cation</name>
        <dbReference type="ChEBI" id="CHEBI:60240"/>
    </ligand>
</feature>
<organism>
    <name type="scientific">Nostoc sp. (strain PCC 7120 / SAG 25.82 / UTEX 2576)</name>
    <dbReference type="NCBI Taxonomy" id="103690"/>
    <lineage>
        <taxon>Bacteria</taxon>
        <taxon>Bacillati</taxon>
        <taxon>Cyanobacteriota</taxon>
        <taxon>Cyanophyceae</taxon>
        <taxon>Nostocales</taxon>
        <taxon>Nostocaceae</taxon>
        <taxon>Nostoc</taxon>
    </lineage>
</organism>
<comment type="function">
    <text evidence="1">Nucleotidase that shows phosphatase activity on nucleoside 5'-monophosphates.</text>
</comment>
<comment type="catalytic activity">
    <reaction>
        <text>a ribonucleoside 5'-phosphate + H2O = a ribonucleoside + phosphate</text>
        <dbReference type="Rhea" id="RHEA:12484"/>
        <dbReference type="ChEBI" id="CHEBI:15377"/>
        <dbReference type="ChEBI" id="CHEBI:18254"/>
        <dbReference type="ChEBI" id="CHEBI:43474"/>
        <dbReference type="ChEBI" id="CHEBI:58043"/>
        <dbReference type="EC" id="3.1.3.5"/>
    </reaction>
</comment>
<comment type="cofactor">
    <cofactor evidence="1">
        <name>a divalent metal cation</name>
        <dbReference type="ChEBI" id="CHEBI:60240"/>
    </cofactor>
    <text evidence="1">Binds 1 divalent metal cation per subunit.</text>
</comment>
<comment type="subcellular location">
    <subcellularLocation>
        <location evidence="2">Cytoplasm</location>
    </subcellularLocation>
</comment>
<comment type="similarity">
    <text evidence="2">Belongs to the SurE nucleotidase family.</text>
</comment>
<name>Y3139_NOSS1</name>
<keyword id="KW-0963">Cytoplasm</keyword>
<keyword id="KW-0378">Hydrolase</keyword>
<keyword id="KW-0479">Metal-binding</keyword>
<keyword id="KW-0547">Nucleotide-binding</keyword>
<keyword id="KW-1185">Reference proteome</keyword>
<sequence length="226" mass="24624">MTIILTNDDGIDAPGIKALAQAVSGKNFIVAAPRDHQSGCGHQVTTTRPINLQRRSDSEYAIAGTPADCIRIAITQISQDVKFVLSGINAGGNLGVDAYISGTVAAVREAAMHGIAGVAISHYRKAKQNFDWELAAKWTAEVLEELLHRPLEPGYFWNVNLPHLQPGETQPELVFCQPCTKPLPANYRIDGDDFYYVGEYGKRERTPGSDVDVCFTGNIAITQLRV</sequence>
<reference key="1">
    <citation type="journal article" date="2001" name="DNA Res.">
        <title>Complete genomic sequence of the filamentous nitrogen-fixing cyanobacterium Anabaena sp. strain PCC 7120.</title>
        <authorList>
            <person name="Kaneko T."/>
            <person name="Nakamura Y."/>
            <person name="Wolk C.P."/>
            <person name="Kuritz T."/>
            <person name="Sasamoto S."/>
            <person name="Watanabe A."/>
            <person name="Iriguchi M."/>
            <person name="Ishikawa A."/>
            <person name="Kawashima K."/>
            <person name="Kimura T."/>
            <person name="Kishida Y."/>
            <person name="Kohara M."/>
            <person name="Matsumoto M."/>
            <person name="Matsuno A."/>
            <person name="Muraki A."/>
            <person name="Nakazaki N."/>
            <person name="Shimpo S."/>
            <person name="Sugimoto M."/>
            <person name="Takazawa M."/>
            <person name="Yamada M."/>
            <person name="Yasuda M."/>
            <person name="Tabata S."/>
        </authorList>
    </citation>
    <scope>NUCLEOTIDE SEQUENCE [LARGE SCALE GENOMIC DNA]</scope>
    <source>
        <strain>PCC 7120 / SAG 25.82 / UTEX 2576</strain>
    </source>
</reference>
<accession>Q8YSE9</accession>